<dbReference type="EC" id="2.7.10.1"/>
<dbReference type="EMBL" id="M20386">
    <property type="protein sequence ID" value="AAA48760.1"/>
    <property type="molecule type" value="mRNA"/>
</dbReference>
<dbReference type="RefSeq" id="NP_990828.2">
    <property type="nucleotide sequence ID" value="NM_205497.2"/>
</dbReference>
<dbReference type="SMR" id="P13387"/>
<dbReference type="BioGRID" id="676741">
    <property type="interactions" value="2"/>
</dbReference>
<dbReference type="FunCoup" id="P13387">
    <property type="interactions" value="770"/>
</dbReference>
<dbReference type="STRING" id="9031.ENSGALP00000053328"/>
<dbReference type="GlyCosmos" id="P13387">
    <property type="glycosylation" value="11 sites, No reported glycans"/>
</dbReference>
<dbReference type="GlyGen" id="P13387">
    <property type="glycosylation" value="11 sites"/>
</dbReference>
<dbReference type="iPTMnet" id="P13387"/>
<dbReference type="PaxDb" id="9031-ENSGALP00000020165"/>
<dbReference type="GeneID" id="396494"/>
<dbReference type="KEGG" id="gga:396494"/>
<dbReference type="CTD" id="1956"/>
<dbReference type="VEuPathDB" id="HostDB:geneid_396494"/>
<dbReference type="eggNOG" id="KOG1025">
    <property type="taxonomic scope" value="Eukaryota"/>
</dbReference>
<dbReference type="InParanoid" id="P13387"/>
<dbReference type="OrthoDB" id="6219513at2759"/>
<dbReference type="PhylomeDB" id="P13387"/>
<dbReference type="Proteomes" id="UP000000539">
    <property type="component" value="Unassembled WGS sequence"/>
</dbReference>
<dbReference type="GO" id="GO:0005789">
    <property type="term" value="C:endoplasmic reticulum membrane"/>
    <property type="evidence" value="ECO:0007669"/>
    <property type="project" value="UniProtKB-SubCell"/>
</dbReference>
<dbReference type="GO" id="GO:0010008">
    <property type="term" value="C:endosome membrane"/>
    <property type="evidence" value="ECO:0007669"/>
    <property type="project" value="UniProtKB-SubCell"/>
</dbReference>
<dbReference type="GO" id="GO:0000139">
    <property type="term" value="C:Golgi membrane"/>
    <property type="evidence" value="ECO:0007669"/>
    <property type="project" value="UniProtKB-SubCell"/>
</dbReference>
<dbReference type="GO" id="GO:0031965">
    <property type="term" value="C:nuclear membrane"/>
    <property type="evidence" value="ECO:0007669"/>
    <property type="project" value="UniProtKB-SubCell"/>
</dbReference>
<dbReference type="GO" id="GO:0005634">
    <property type="term" value="C:nucleus"/>
    <property type="evidence" value="ECO:0000250"/>
    <property type="project" value="UniProtKB"/>
</dbReference>
<dbReference type="GO" id="GO:0005886">
    <property type="term" value="C:plasma membrane"/>
    <property type="evidence" value="ECO:0007669"/>
    <property type="project" value="UniProtKB-SubCell"/>
</dbReference>
<dbReference type="GO" id="GO:0005524">
    <property type="term" value="F:ATP binding"/>
    <property type="evidence" value="ECO:0007669"/>
    <property type="project" value="UniProtKB-KW"/>
</dbReference>
<dbReference type="GO" id="GO:0004713">
    <property type="term" value="F:protein tyrosine kinase activity"/>
    <property type="evidence" value="ECO:0000250"/>
    <property type="project" value="UniProtKB"/>
</dbReference>
<dbReference type="GO" id="GO:0004714">
    <property type="term" value="F:transmembrane receptor protein tyrosine kinase activity"/>
    <property type="evidence" value="ECO:0007669"/>
    <property type="project" value="UniProtKB-EC"/>
</dbReference>
<dbReference type="GO" id="GO:0071364">
    <property type="term" value="P:cellular response to epidermal growth factor stimulus"/>
    <property type="evidence" value="ECO:0000250"/>
    <property type="project" value="UniProtKB"/>
</dbReference>
<dbReference type="GO" id="GO:0007173">
    <property type="term" value="P:epidermal growth factor receptor signaling pathway"/>
    <property type="evidence" value="ECO:0000250"/>
    <property type="project" value="UniProtKB"/>
</dbReference>
<dbReference type="GO" id="GO:0007611">
    <property type="term" value="P:learning or memory"/>
    <property type="evidence" value="ECO:0000250"/>
    <property type="project" value="UniProtKB"/>
</dbReference>
<dbReference type="CDD" id="cd00064">
    <property type="entry name" value="FU"/>
    <property type="match status" value="3"/>
</dbReference>
<dbReference type="CDD" id="cd12093">
    <property type="entry name" value="TM_ErbB1"/>
    <property type="match status" value="1"/>
</dbReference>
<dbReference type="FunFam" id="2.10.220.10:FF:000001">
    <property type="entry name" value="Receptor protein-tyrosine kinase"/>
    <property type="match status" value="1"/>
</dbReference>
<dbReference type="FunFam" id="2.10.220.10:FF:000008">
    <property type="entry name" value="Receptor protein-tyrosine kinase"/>
    <property type="match status" value="1"/>
</dbReference>
<dbReference type="FunFam" id="3.80.20.20:FF:000005">
    <property type="entry name" value="Receptor protein-tyrosine kinase"/>
    <property type="match status" value="1"/>
</dbReference>
<dbReference type="FunFam" id="3.80.20.20:FF:000006">
    <property type="entry name" value="Receptor protein-tyrosine kinase"/>
    <property type="match status" value="1"/>
</dbReference>
<dbReference type="Gene3D" id="6.10.250.2930">
    <property type="match status" value="1"/>
</dbReference>
<dbReference type="Gene3D" id="2.10.220.10">
    <property type="entry name" value="Hormone Receptor, Insulin-like Growth Factor Receptor 1, Chain A, domain 2"/>
    <property type="match status" value="3"/>
</dbReference>
<dbReference type="Gene3D" id="3.80.20.20">
    <property type="entry name" value="Receptor L-domain"/>
    <property type="match status" value="2"/>
</dbReference>
<dbReference type="InterPro" id="IPR044912">
    <property type="entry name" value="Egfr_JX_dom"/>
</dbReference>
<dbReference type="InterPro" id="IPR006211">
    <property type="entry name" value="Furin-like_Cys-rich_dom"/>
</dbReference>
<dbReference type="InterPro" id="IPR006212">
    <property type="entry name" value="Furin_repeat"/>
</dbReference>
<dbReference type="InterPro" id="IPR032778">
    <property type="entry name" value="GF_recep_IV"/>
</dbReference>
<dbReference type="InterPro" id="IPR009030">
    <property type="entry name" value="Growth_fac_rcpt_cys_sf"/>
</dbReference>
<dbReference type="InterPro" id="IPR000494">
    <property type="entry name" value="Rcpt_L-dom"/>
</dbReference>
<dbReference type="InterPro" id="IPR036941">
    <property type="entry name" value="Rcpt_L-dom_sf"/>
</dbReference>
<dbReference type="InterPro" id="IPR049328">
    <property type="entry name" value="TM_ErbB1"/>
</dbReference>
<dbReference type="Pfam" id="PF00757">
    <property type="entry name" value="Furin-like"/>
    <property type="match status" value="1"/>
</dbReference>
<dbReference type="Pfam" id="PF14843">
    <property type="entry name" value="GF_recep_IV"/>
    <property type="match status" value="1"/>
</dbReference>
<dbReference type="Pfam" id="PF01030">
    <property type="entry name" value="Recep_L_domain"/>
    <property type="match status" value="2"/>
</dbReference>
<dbReference type="Pfam" id="PF21314">
    <property type="entry name" value="TM_ErbB1"/>
    <property type="match status" value="1"/>
</dbReference>
<dbReference type="SMART" id="SM00261">
    <property type="entry name" value="FU"/>
    <property type="match status" value="5"/>
</dbReference>
<dbReference type="SUPFAM" id="SSF57184">
    <property type="entry name" value="Growth factor receptor domain"/>
    <property type="match status" value="2"/>
</dbReference>
<dbReference type="SUPFAM" id="SSF52058">
    <property type="entry name" value="L domain-like"/>
    <property type="match status" value="2"/>
</dbReference>
<sequence length="703" mass="77427">MGVRSPLSASGPRGAAVLVLLLLGVALCSAVEEKKVCQGTNNKLTQLGHVEDHFTSLQRMYNNCEVVLSNLEITYVEHNRDLTFLKTIQEVAGYVLIALNMVDVIPLENLQIIRGNVLYDNSFALAVLSNYHMNKTQGLRELPMKRLSEILNGGVKISNNPKLCNMDTVLWNDIIDTSRKPLTVLDFASNLSSCPKCHPNCTEDHCWGAGEQNCQTLTKVICAQQCSGRCRGKVPSDCCHNQCAAGCTGPRESDCLACRKFRDDATCKDTCPPLVLYNPTTYQMDVNPEGKYSFGATCVRECPHNYVVTDHGSCVRSCNTDTYEVEENGVRKCKKCDGLCSKVCNGIGIGELKGILSINATNIDSFKNCTKINGDVSILPVAFLGDAFTKTLPLDPKKLDVFRTVKEISGFLLIQAWPDNATDLYAFENLEIIRGRTKQHGQYSLAVVNLKIQSLGLRSLKEISDGDIAIMKNKNLCYADTMNWRSLFATQSQKTKIIQNRNKNDCTADRHVCDPLCSDVGCWGPGPFHCFSCRFFSRQKECVKQCNILQGEPREFERDSKCLPCHSECLVQNSTAYNTTCSGPGPDHCMKCAHFIDGPHCVKACPAGVLGENDTLVWKYADANAVCQLCHPNCTRGCKGPGLEGCPNGSKTPSIAAGVVGGLLCLVVVGLGIGLYLRRRHIVRKRTLRRLLQERELVEPLTP</sequence>
<reference key="1">
    <citation type="journal article" date="1988" name="Mol. Cell. Biol.">
        <title>Chicken epidermal growth factor (EGF) receptor: cDNA cloning, expression in mouse cells, and differential binding of EGF and transforming growth factor alpha.</title>
        <authorList>
            <person name="Lax I."/>
            <person name="Johnson A."/>
            <person name="Howk R."/>
            <person name="Sap J."/>
            <person name="Bellot F."/>
            <person name="Winkler M."/>
            <person name="Ullrich A."/>
            <person name="Vennstrom B."/>
            <person name="Schlessinger J."/>
            <person name="Givol D."/>
        </authorList>
    </citation>
    <scope>NUCLEOTIDE SEQUENCE [MRNA]</scope>
    <scope>FUNCTION</scope>
    <scope>SUBCELLULAR LOCATION</scope>
    <scope>PHOSPHORYLATION</scope>
</reference>
<feature type="signal peptide" evidence="2">
    <location>
        <begin position="1"/>
        <end position="30"/>
    </location>
</feature>
<feature type="chain" id="PRO_0000016667" description="Epidermal growth factor receptor">
    <location>
        <begin position="31"/>
        <end position="703" status="greater than"/>
    </location>
</feature>
<feature type="topological domain" description="Extracellular" evidence="3">
    <location>
        <begin position="31"/>
        <end position="654"/>
    </location>
</feature>
<feature type="transmembrane region" description="Helical" evidence="3">
    <location>
        <begin position="655"/>
        <end position="667"/>
    </location>
</feature>
<feature type="topological domain" description="Cytoplasmic" evidence="3">
    <location>
        <begin position="668"/>
        <end position="703" status="greater than"/>
    </location>
</feature>
<feature type="modified residue" description="Phosphothreonine" evidence="2">
    <location>
        <position position="687"/>
    </location>
</feature>
<feature type="modified residue" description="Phosphothreonine" evidence="2">
    <location>
        <position position="702"/>
    </location>
</feature>
<feature type="glycosylation site" description="N-linked (GlcNAc...) asparagine" evidence="3">
    <location>
        <position position="134"/>
    </location>
</feature>
<feature type="glycosylation site" description="N-linked (GlcNAc...) asparagine" evidence="3">
    <location>
        <position position="190"/>
    </location>
</feature>
<feature type="glycosylation site" description="N-linked (GlcNAc...) asparagine" evidence="3">
    <location>
        <position position="200"/>
    </location>
</feature>
<feature type="glycosylation site" description="N-linked (GlcNAc...) asparagine" evidence="3">
    <location>
        <position position="359"/>
    </location>
</feature>
<feature type="glycosylation site" description="N-linked (GlcNAc...) asparagine" evidence="3">
    <location>
        <position position="368"/>
    </location>
</feature>
<feature type="glycosylation site" description="N-linked (GlcNAc...) asparagine" evidence="3">
    <location>
        <position position="420"/>
    </location>
</feature>
<feature type="glycosylation site" description="N-linked (GlcNAc...) asparagine" evidence="3">
    <location>
        <position position="573"/>
    </location>
</feature>
<feature type="glycosylation site" description="N-linked (GlcNAc...) asparagine" evidence="3">
    <location>
        <position position="578"/>
    </location>
</feature>
<feature type="glycosylation site" description="N-linked (GlcNAc...) asparagine" evidence="3">
    <location>
        <position position="613"/>
    </location>
</feature>
<feature type="glycosylation site" description="N-linked (GlcNAc...) asparagine" evidence="3">
    <location>
        <position position="633"/>
    </location>
</feature>
<feature type="glycosylation site" description="N-linked (GlcNAc...) asparagine" evidence="3">
    <location>
        <position position="648"/>
    </location>
</feature>
<feature type="disulfide bond" evidence="2">
    <location>
        <begin position="37"/>
        <end position="64"/>
    </location>
</feature>
<feature type="disulfide bond" evidence="2">
    <location>
        <begin position="164"/>
        <end position="194"/>
    </location>
</feature>
<feature type="disulfide bond" evidence="2">
    <location>
        <begin position="197"/>
        <end position="206"/>
    </location>
</feature>
<feature type="disulfide bond" evidence="2">
    <location>
        <begin position="201"/>
        <end position="214"/>
    </location>
</feature>
<feature type="disulfide bond" evidence="2">
    <location>
        <begin position="222"/>
        <end position="230"/>
    </location>
</feature>
<feature type="disulfide bond" evidence="2">
    <location>
        <begin position="226"/>
        <end position="238"/>
    </location>
</feature>
<feature type="disulfide bond" evidence="2">
    <location>
        <begin position="239"/>
        <end position="247"/>
    </location>
</feature>
<feature type="disulfide bond" evidence="2">
    <location>
        <begin position="243"/>
        <end position="255"/>
    </location>
</feature>
<feature type="disulfide bond" evidence="2">
    <location>
        <begin position="258"/>
        <end position="267"/>
    </location>
</feature>
<feature type="disulfide bond" evidence="2">
    <location>
        <begin position="271"/>
        <end position="298"/>
    </location>
</feature>
<feature type="disulfide bond" evidence="2">
    <location>
        <begin position="302"/>
        <end position="314"/>
    </location>
</feature>
<feature type="disulfide bond" evidence="2">
    <location>
        <begin position="318"/>
        <end position="333"/>
    </location>
</feature>
<feature type="disulfide bond" evidence="2">
    <location>
        <begin position="336"/>
        <end position="340"/>
    </location>
</feature>
<feature type="disulfide bond" evidence="2">
    <location>
        <begin position="344"/>
        <end position="369"/>
    </location>
</feature>
<feature type="disulfide bond" evidence="2">
    <location>
        <begin position="477"/>
        <end position="506"/>
    </location>
</feature>
<feature type="disulfide bond" evidence="2">
    <location>
        <begin position="513"/>
        <end position="522"/>
    </location>
</feature>
<feature type="disulfide bond" evidence="2">
    <location>
        <begin position="517"/>
        <end position="530"/>
    </location>
</feature>
<feature type="disulfide bond" evidence="2">
    <location>
        <begin position="533"/>
        <end position="542"/>
    </location>
</feature>
<feature type="disulfide bond" evidence="2">
    <location>
        <begin position="546"/>
        <end position="562"/>
    </location>
</feature>
<feature type="disulfide bond" evidence="2">
    <location>
        <begin position="565"/>
        <end position="581"/>
    </location>
</feature>
<feature type="disulfide bond" evidence="2">
    <location>
        <begin position="569"/>
        <end position="589"/>
    </location>
</feature>
<feature type="disulfide bond" evidence="2">
    <location>
        <begin position="592"/>
        <end position="601"/>
    </location>
</feature>
<feature type="disulfide bond" evidence="2">
    <location>
        <begin position="605"/>
        <end position="627"/>
    </location>
</feature>
<feature type="disulfide bond" evidence="2">
    <location>
        <begin position="630"/>
        <end position="638"/>
    </location>
</feature>
<feature type="disulfide bond" evidence="2">
    <location>
        <begin position="634"/>
        <end position="646"/>
    </location>
</feature>
<feature type="non-terminal residue">
    <location>
        <position position="703"/>
    </location>
</feature>
<comment type="function">
    <text evidence="2 6">Receptor tyrosine kinase binding ligands of the EGF family and activating several signaling cascades to convert extracellular cues into appropriate cellular responses (PubMed:3260329). Known ligands include EGF and TGFA/TGF-alpha (PubMed:3260329). Ligand binding triggers receptor homo- and/or heterodimerization and autophosphorylation on key cytoplasmic residues (By similarity). The phosphorylated receptor recruits adapter proteins like GRB2 which in turn activates complex downstream signaling cascades (By similarity). Activates at least 4 major downstream signaling cascades including the RAS-RAF-MEK-ERK, PI3 kinase-AKT, PLCgamma-PKC and STATs modules (By similarity). May also activate the NF-kappa-B signaling cascade (By similarity).</text>
</comment>
<comment type="catalytic activity">
    <reaction evidence="5">
        <text>L-tyrosyl-[protein] + ATP = O-phospho-L-tyrosyl-[protein] + ADP + H(+)</text>
        <dbReference type="Rhea" id="RHEA:10596"/>
        <dbReference type="Rhea" id="RHEA-COMP:10136"/>
        <dbReference type="Rhea" id="RHEA-COMP:20101"/>
        <dbReference type="ChEBI" id="CHEBI:15378"/>
        <dbReference type="ChEBI" id="CHEBI:30616"/>
        <dbReference type="ChEBI" id="CHEBI:46858"/>
        <dbReference type="ChEBI" id="CHEBI:61978"/>
        <dbReference type="ChEBI" id="CHEBI:456216"/>
        <dbReference type="EC" id="2.7.10.1"/>
    </reaction>
</comment>
<comment type="activity regulation">
    <text>Endocytosis and inhibition of the activated EGFR by phosphatases constitute immediate regulatory mechanisms. Moreover, inducible feedback inhibitors may constitute alternative regulatory mechanisms for the EGFR signaling.</text>
</comment>
<comment type="subunit">
    <text evidence="2">Binding of the ligand triggers homo- and/or heterodimerization of the receptor triggering its autophosphorylation.</text>
</comment>
<comment type="subcellular location">
    <subcellularLocation>
        <location evidence="6">Cell membrane</location>
        <topology evidence="2">Single-pass type I membrane protein</topology>
    </subcellularLocation>
    <subcellularLocation>
        <location evidence="1">Endoplasmic reticulum membrane</location>
        <topology evidence="1">Single-pass type I membrane protein</topology>
    </subcellularLocation>
    <subcellularLocation>
        <location evidence="1">Golgi apparatus membrane</location>
        <topology evidence="1">Single-pass type I membrane protein</topology>
    </subcellularLocation>
    <subcellularLocation>
        <location evidence="1">Nucleus membrane</location>
        <topology evidence="1">Single-pass type I membrane protein</topology>
    </subcellularLocation>
    <subcellularLocation>
        <location evidence="2">Endosome</location>
    </subcellularLocation>
    <subcellularLocation>
        <location>Endosome membrane</location>
    </subcellularLocation>
    <subcellularLocation>
        <location evidence="2">Nucleus</location>
    </subcellularLocation>
    <text evidence="2">In response to EGF, translocated from the cell membrane to the nucleus via Golgi and ER. Endocytosed upon activation by ligand (By similarity).</text>
</comment>
<comment type="PTM">
    <text evidence="6">Phosphorylated. Autophosphorylates.</text>
</comment>
<comment type="similarity">
    <text evidence="4">Belongs to the protein kinase superfamily. Tyr protein kinase family. EGF receptor subfamily.</text>
</comment>
<keyword id="KW-0067">ATP-binding</keyword>
<keyword id="KW-1003">Cell membrane</keyword>
<keyword id="KW-1015">Disulfide bond</keyword>
<keyword id="KW-0256">Endoplasmic reticulum</keyword>
<keyword id="KW-0967">Endosome</keyword>
<keyword id="KW-0325">Glycoprotein</keyword>
<keyword id="KW-0333">Golgi apparatus</keyword>
<keyword id="KW-0418">Kinase</keyword>
<keyword id="KW-0472">Membrane</keyword>
<keyword id="KW-0547">Nucleotide-binding</keyword>
<keyword id="KW-0539">Nucleus</keyword>
<keyword id="KW-0597">Phosphoprotein</keyword>
<keyword id="KW-0675">Receptor</keyword>
<keyword id="KW-1185">Reference proteome</keyword>
<keyword id="KW-0732">Signal</keyword>
<keyword id="KW-0808">Transferase</keyword>
<keyword id="KW-0812">Transmembrane</keyword>
<keyword id="KW-1133">Transmembrane helix</keyword>
<keyword id="KW-0829">Tyrosine-protein kinase</keyword>
<protein>
    <recommendedName>
        <fullName>Epidermal growth factor receptor</fullName>
        <shortName>CER</shortName>
        <ecNumber>2.7.10.1</ecNumber>
    </recommendedName>
</protein>
<proteinExistence type="evidence at protein level"/>
<organism>
    <name type="scientific">Gallus gallus</name>
    <name type="common">Chicken</name>
    <dbReference type="NCBI Taxonomy" id="9031"/>
    <lineage>
        <taxon>Eukaryota</taxon>
        <taxon>Metazoa</taxon>
        <taxon>Chordata</taxon>
        <taxon>Craniata</taxon>
        <taxon>Vertebrata</taxon>
        <taxon>Euteleostomi</taxon>
        <taxon>Archelosauria</taxon>
        <taxon>Archosauria</taxon>
        <taxon>Dinosauria</taxon>
        <taxon>Saurischia</taxon>
        <taxon>Theropoda</taxon>
        <taxon>Coelurosauria</taxon>
        <taxon>Aves</taxon>
        <taxon>Neognathae</taxon>
        <taxon>Galloanserae</taxon>
        <taxon>Galliformes</taxon>
        <taxon>Phasianidae</taxon>
        <taxon>Phasianinae</taxon>
        <taxon>Gallus</taxon>
    </lineage>
</organism>
<gene>
    <name type="primary">EGFR</name>
</gene>
<evidence type="ECO:0000250" key="1"/>
<evidence type="ECO:0000250" key="2">
    <source>
        <dbReference type="UniProtKB" id="P00533"/>
    </source>
</evidence>
<evidence type="ECO:0000255" key="3"/>
<evidence type="ECO:0000255" key="4">
    <source>
        <dbReference type="PROSITE-ProRule" id="PRU00159"/>
    </source>
</evidence>
<evidence type="ECO:0000255" key="5">
    <source>
        <dbReference type="PROSITE-ProRule" id="PRU10028"/>
    </source>
</evidence>
<evidence type="ECO:0000269" key="6">
    <source>
    </source>
</evidence>
<name>EGFR_CHICK</name>
<accession>P13387</accession>